<proteinExistence type="evidence at protein level"/>
<name>ATF5_HUMAN</name>
<reference key="1">
    <citation type="journal article" date="2000" name="Proc. Natl. Acad. Sci. U.S.A.">
        <title>The GABAB receptor interacts directly with the related transcription factors CREB2 and ATFx.</title>
        <authorList>
            <person name="White J.H."/>
            <person name="McIllhinney R.A.J."/>
            <person name="Wise A."/>
            <person name="Ciruela F."/>
            <person name="Chan W.-Y."/>
            <person name="Emson P.C."/>
            <person name="Billinton A."/>
            <person name="Marshall F.H."/>
        </authorList>
    </citation>
    <scope>NUCLEOTIDE SEQUENCE [MRNA]</scope>
    <source>
        <tissue>Brain</tissue>
    </source>
</reference>
<reference key="2">
    <citation type="journal article" date="2004" name="Oncogene">
        <title>Expression profiling and differential screening between hepatoblastomas and the corresponding normal livers: identification of high expression of the PLK1 oncogene as a poor-prognostic indicator of hepatoblastomas.</title>
        <authorList>
            <person name="Yamada S."/>
            <person name="Ohira M."/>
            <person name="Horie H."/>
            <person name="Ando K."/>
            <person name="Takayasu H."/>
            <person name="Suzuki Y."/>
            <person name="Sugano S."/>
            <person name="Hirata T."/>
            <person name="Goto T."/>
            <person name="Matsunaga T."/>
            <person name="Hiyama E."/>
            <person name="Hayashi Y."/>
            <person name="Ando H."/>
            <person name="Suita S."/>
            <person name="Kaneko M."/>
            <person name="Sasaki F."/>
            <person name="Hashizume K."/>
            <person name="Ohnuma N."/>
            <person name="Nakagawara A."/>
        </authorList>
    </citation>
    <scope>NUCLEOTIDE SEQUENCE [MRNA]</scope>
    <scope>VARIANT LEU-121</scope>
    <source>
        <tissue>Hepatoblastoma</tissue>
    </source>
</reference>
<reference key="3">
    <citation type="submission" date="1998-12" db="EMBL/GenBank/DDBJ databases">
        <title>cDNA clone encoding leucine-zipper protein.</title>
        <authorList>
            <person name="Kohroki J."/>
            <person name="Tanaka K."/>
        </authorList>
    </citation>
    <scope>NUCLEOTIDE SEQUENCE [MRNA]</scope>
</reference>
<reference key="4">
    <citation type="journal article" date="2004" name="Nat. Genet.">
        <title>Complete sequencing and characterization of 21,243 full-length human cDNAs.</title>
        <authorList>
            <person name="Ota T."/>
            <person name="Suzuki Y."/>
            <person name="Nishikawa T."/>
            <person name="Otsuki T."/>
            <person name="Sugiyama T."/>
            <person name="Irie R."/>
            <person name="Wakamatsu A."/>
            <person name="Hayashi K."/>
            <person name="Sato H."/>
            <person name="Nagai K."/>
            <person name="Kimura K."/>
            <person name="Makita H."/>
            <person name="Sekine M."/>
            <person name="Obayashi M."/>
            <person name="Nishi T."/>
            <person name="Shibahara T."/>
            <person name="Tanaka T."/>
            <person name="Ishii S."/>
            <person name="Yamamoto J."/>
            <person name="Saito K."/>
            <person name="Kawai Y."/>
            <person name="Isono Y."/>
            <person name="Nakamura Y."/>
            <person name="Nagahari K."/>
            <person name="Murakami K."/>
            <person name="Yasuda T."/>
            <person name="Iwayanagi T."/>
            <person name="Wagatsuma M."/>
            <person name="Shiratori A."/>
            <person name="Sudo H."/>
            <person name="Hosoiri T."/>
            <person name="Kaku Y."/>
            <person name="Kodaira H."/>
            <person name="Kondo H."/>
            <person name="Sugawara M."/>
            <person name="Takahashi M."/>
            <person name="Kanda K."/>
            <person name="Yokoi T."/>
            <person name="Furuya T."/>
            <person name="Kikkawa E."/>
            <person name="Omura Y."/>
            <person name="Abe K."/>
            <person name="Kamihara K."/>
            <person name="Katsuta N."/>
            <person name="Sato K."/>
            <person name="Tanikawa M."/>
            <person name="Yamazaki M."/>
            <person name="Ninomiya K."/>
            <person name="Ishibashi T."/>
            <person name="Yamashita H."/>
            <person name="Murakawa K."/>
            <person name="Fujimori K."/>
            <person name="Tanai H."/>
            <person name="Kimata M."/>
            <person name="Watanabe M."/>
            <person name="Hiraoka S."/>
            <person name="Chiba Y."/>
            <person name="Ishida S."/>
            <person name="Ono Y."/>
            <person name="Takiguchi S."/>
            <person name="Watanabe S."/>
            <person name="Yosida M."/>
            <person name="Hotuta T."/>
            <person name="Kusano J."/>
            <person name="Kanehori K."/>
            <person name="Takahashi-Fujii A."/>
            <person name="Hara H."/>
            <person name="Tanase T.-O."/>
            <person name="Nomura Y."/>
            <person name="Togiya S."/>
            <person name="Komai F."/>
            <person name="Hara R."/>
            <person name="Takeuchi K."/>
            <person name="Arita M."/>
            <person name="Imose N."/>
            <person name="Musashino K."/>
            <person name="Yuuki H."/>
            <person name="Oshima A."/>
            <person name="Sasaki N."/>
            <person name="Aotsuka S."/>
            <person name="Yoshikawa Y."/>
            <person name="Matsunawa H."/>
            <person name="Ichihara T."/>
            <person name="Shiohata N."/>
            <person name="Sano S."/>
            <person name="Moriya S."/>
            <person name="Momiyama H."/>
            <person name="Satoh N."/>
            <person name="Takami S."/>
            <person name="Terashima Y."/>
            <person name="Suzuki O."/>
            <person name="Nakagawa S."/>
            <person name="Senoh A."/>
            <person name="Mizoguchi H."/>
            <person name="Goto Y."/>
            <person name="Shimizu F."/>
            <person name="Wakebe H."/>
            <person name="Hishigaki H."/>
            <person name="Watanabe T."/>
            <person name="Sugiyama A."/>
            <person name="Takemoto M."/>
            <person name="Kawakami B."/>
            <person name="Yamazaki M."/>
            <person name="Watanabe K."/>
            <person name="Kumagai A."/>
            <person name="Itakura S."/>
            <person name="Fukuzumi Y."/>
            <person name="Fujimori Y."/>
            <person name="Komiyama M."/>
            <person name="Tashiro H."/>
            <person name="Tanigami A."/>
            <person name="Fujiwara T."/>
            <person name="Ono T."/>
            <person name="Yamada K."/>
            <person name="Fujii Y."/>
            <person name="Ozaki K."/>
            <person name="Hirao M."/>
            <person name="Ohmori Y."/>
            <person name="Kawabata A."/>
            <person name="Hikiji T."/>
            <person name="Kobatake N."/>
            <person name="Inagaki H."/>
            <person name="Ikema Y."/>
            <person name="Okamoto S."/>
            <person name="Okitani R."/>
            <person name="Kawakami T."/>
            <person name="Noguchi S."/>
            <person name="Itoh T."/>
            <person name="Shigeta K."/>
            <person name="Senba T."/>
            <person name="Matsumura K."/>
            <person name="Nakajima Y."/>
            <person name="Mizuno T."/>
            <person name="Morinaga M."/>
            <person name="Sasaki M."/>
            <person name="Togashi T."/>
            <person name="Oyama M."/>
            <person name="Hata H."/>
            <person name="Watanabe M."/>
            <person name="Komatsu T."/>
            <person name="Mizushima-Sugano J."/>
            <person name="Satoh T."/>
            <person name="Shirai Y."/>
            <person name="Takahashi Y."/>
            <person name="Nakagawa K."/>
            <person name="Okumura K."/>
            <person name="Nagase T."/>
            <person name="Nomura N."/>
            <person name="Kikuchi H."/>
            <person name="Masuho Y."/>
            <person name="Yamashita R."/>
            <person name="Nakai K."/>
            <person name="Yada T."/>
            <person name="Nakamura Y."/>
            <person name="Ohara O."/>
            <person name="Isogai T."/>
            <person name="Sugano S."/>
        </authorList>
    </citation>
    <scope>NUCLEOTIDE SEQUENCE [LARGE SCALE MRNA]</scope>
</reference>
<reference key="5">
    <citation type="journal article" date="2004" name="Nature">
        <title>The DNA sequence and biology of human chromosome 19.</title>
        <authorList>
            <person name="Grimwood J."/>
            <person name="Gordon L.A."/>
            <person name="Olsen A.S."/>
            <person name="Terry A."/>
            <person name="Schmutz J."/>
            <person name="Lamerdin J.E."/>
            <person name="Hellsten U."/>
            <person name="Goodstein D."/>
            <person name="Couronne O."/>
            <person name="Tran-Gyamfi M."/>
            <person name="Aerts A."/>
            <person name="Altherr M."/>
            <person name="Ashworth L."/>
            <person name="Bajorek E."/>
            <person name="Black S."/>
            <person name="Branscomb E."/>
            <person name="Caenepeel S."/>
            <person name="Carrano A.V."/>
            <person name="Caoile C."/>
            <person name="Chan Y.M."/>
            <person name="Christensen M."/>
            <person name="Cleland C.A."/>
            <person name="Copeland A."/>
            <person name="Dalin E."/>
            <person name="Dehal P."/>
            <person name="Denys M."/>
            <person name="Detter J.C."/>
            <person name="Escobar J."/>
            <person name="Flowers D."/>
            <person name="Fotopulos D."/>
            <person name="Garcia C."/>
            <person name="Georgescu A.M."/>
            <person name="Glavina T."/>
            <person name="Gomez M."/>
            <person name="Gonzales E."/>
            <person name="Groza M."/>
            <person name="Hammon N."/>
            <person name="Hawkins T."/>
            <person name="Haydu L."/>
            <person name="Ho I."/>
            <person name="Huang W."/>
            <person name="Israni S."/>
            <person name="Jett J."/>
            <person name="Kadner K."/>
            <person name="Kimball H."/>
            <person name="Kobayashi A."/>
            <person name="Larionov V."/>
            <person name="Leem S.-H."/>
            <person name="Lopez F."/>
            <person name="Lou Y."/>
            <person name="Lowry S."/>
            <person name="Malfatti S."/>
            <person name="Martinez D."/>
            <person name="McCready P.M."/>
            <person name="Medina C."/>
            <person name="Morgan J."/>
            <person name="Nelson K."/>
            <person name="Nolan M."/>
            <person name="Ovcharenko I."/>
            <person name="Pitluck S."/>
            <person name="Pollard M."/>
            <person name="Popkie A.P."/>
            <person name="Predki P."/>
            <person name="Quan G."/>
            <person name="Ramirez L."/>
            <person name="Rash S."/>
            <person name="Retterer J."/>
            <person name="Rodriguez A."/>
            <person name="Rogers S."/>
            <person name="Salamov A."/>
            <person name="Salazar A."/>
            <person name="She X."/>
            <person name="Smith D."/>
            <person name="Slezak T."/>
            <person name="Solovyev V."/>
            <person name="Thayer N."/>
            <person name="Tice H."/>
            <person name="Tsai M."/>
            <person name="Ustaszewska A."/>
            <person name="Vo N."/>
            <person name="Wagner M."/>
            <person name="Wheeler J."/>
            <person name="Wu K."/>
            <person name="Xie G."/>
            <person name="Yang J."/>
            <person name="Dubchak I."/>
            <person name="Furey T.S."/>
            <person name="DeJong P."/>
            <person name="Dickson M."/>
            <person name="Gordon D."/>
            <person name="Eichler E.E."/>
            <person name="Pennacchio L.A."/>
            <person name="Richardson P."/>
            <person name="Stubbs L."/>
            <person name="Rokhsar D.S."/>
            <person name="Myers R.M."/>
            <person name="Rubin E.M."/>
            <person name="Lucas S.M."/>
        </authorList>
    </citation>
    <scope>NUCLEOTIDE SEQUENCE [LARGE SCALE GENOMIC DNA]</scope>
</reference>
<reference key="6">
    <citation type="submission" date="2005-07" db="EMBL/GenBank/DDBJ databases">
        <authorList>
            <person name="Mural R.J."/>
            <person name="Istrail S."/>
            <person name="Sutton G.G."/>
            <person name="Florea L."/>
            <person name="Halpern A.L."/>
            <person name="Mobarry C.M."/>
            <person name="Lippert R."/>
            <person name="Walenz B."/>
            <person name="Shatkay H."/>
            <person name="Dew I."/>
            <person name="Miller J.R."/>
            <person name="Flanigan M.J."/>
            <person name="Edwards N.J."/>
            <person name="Bolanos R."/>
            <person name="Fasulo D."/>
            <person name="Halldorsson B.V."/>
            <person name="Hannenhalli S."/>
            <person name="Turner R."/>
            <person name="Yooseph S."/>
            <person name="Lu F."/>
            <person name="Nusskern D.R."/>
            <person name="Shue B.C."/>
            <person name="Zheng X.H."/>
            <person name="Zhong F."/>
            <person name="Delcher A.L."/>
            <person name="Huson D.H."/>
            <person name="Kravitz S.A."/>
            <person name="Mouchard L."/>
            <person name="Reinert K."/>
            <person name="Remington K.A."/>
            <person name="Clark A.G."/>
            <person name="Waterman M.S."/>
            <person name="Eichler E.E."/>
            <person name="Adams M.D."/>
            <person name="Hunkapiller M.W."/>
            <person name="Myers E.W."/>
            <person name="Venter J.C."/>
        </authorList>
    </citation>
    <scope>NUCLEOTIDE SEQUENCE [LARGE SCALE GENOMIC DNA]</scope>
</reference>
<reference key="7">
    <citation type="journal article" date="2004" name="Genome Res.">
        <title>The status, quality, and expansion of the NIH full-length cDNA project: the Mammalian Gene Collection (MGC).</title>
        <authorList>
            <consortium name="The MGC Project Team"/>
        </authorList>
    </citation>
    <scope>NUCLEOTIDE SEQUENCE [LARGE SCALE MRNA]</scope>
    <scope>VARIANT LEU-121</scope>
    <source>
        <tissue>Placenta</tissue>
    </source>
</reference>
<reference key="8">
    <citation type="journal article" date="1999" name="Mol. Cell. Biol.">
        <title>Human Cdc34 and Rad6B ubiquitin-conjugating enzymes target repressors of cyclic AMP-induced transcription for proteolysis.</title>
        <authorList>
            <person name="Pati D."/>
            <person name="Meistrich M.L."/>
            <person name="Plon S.E."/>
        </authorList>
    </citation>
    <scope>NUCLEOTIDE SEQUENCE [MRNA] OF 161-282</scope>
    <scope>FUNCTION</scope>
    <scope>UBIQUITINATION</scope>
</reference>
<reference key="9">
    <citation type="journal article" date="2004" name="Biochem. Biophys. Res. Commun.">
        <title>Cyclin D3 interacts with human activating transcription factor 5 and potentiates its transcription activity.</title>
        <authorList>
            <person name="Liu W."/>
            <person name="Sun M."/>
            <person name="Jiang J."/>
            <person name="Shen X."/>
            <person name="Sun Q."/>
            <person name="Liu W."/>
            <person name="Shen H."/>
            <person name="Gu J."/>
        </authorList>
    </citation>
    <scope>INTERACTION WITH CCND3</scope>
    <scope>FUNCTION</scope>
    <scope>SUBCELLULAR LOCATION</scope>
</reference>
<reference key="10">
    <citation type="journal article" date="2008" name="Cancer Res.">
        <title>Re-expression of transcription factor ATF5 in hepatocellular carcinoma induces G2-M arrest.</title>
        <authorList>
            <person name="Gho J.W."/>
            <person name="Ip W.K."/>
            <person name="Chan K.Y."/>
            <person name="Law P.T."/>
            <person name="Lai P.B."/>
            <person name="Wong N."/>
        </authorList>
    </citation>
    <scope>FUNCTION</scope>
    <scope>DNA-BINDING</scope>
</reference>
<reference key="11">
    <citation type="journal article" date="2008" name="Drug Metab. Dispos.">
        <title>ATF5 is a highly abundant liver-enriched transcription factor that cooperates with constitutive androstane receptor in the transactivation of CYP2B6: implications in hepatic stress responses.</title>
        <authorList>
            <person name="Pascual M."/>
            <person name="Gomez-Lechon M.J."/>
            <person name="Castell J.V."/>
            <person name="Jover R."/>
        </authorList>
    </citation>
    <scope>FUNCTION</scope>
    <scope>TISSUE SPECIFICITY</scope>
</reference>
<reference key="12">
    <citation type="journal article" date="2008" name="J. Biol. Chem.">
        <title>Cdc34-mediated degradation of ATF5 is blocked by cisplatin.</title>
        <authorList>
            <person name="Wei Y."/>
            <person name="Jiang J."/>
            <person name="Liu D."/>
            <person name="Zhou J."/>
            <person name="Chen X."/>
            <person name="Zhang S."/>
            <person name="Zong H."/>
            <person name="Yun X."/>
            <person name="Gu J."/>
        </authorList>
    </citation>
    <scope>UBIQUITINATION</scope>
    <scope>INDUCTION BY CISPLATIN</scope>
</reference>
<reference key="13">
    <citation type="journal article" date="2010" name="Life Sci.">
        <title>Regulation of the human CHOP gene promoter by the stress response transcription factor ATF5 via the AARE1 site in human hepatoma HepG2 cells.</title>
        <authorList>
            <person name="Yamazaki T."/>
            <person name="Ohmi A."/>
            <person name="Kurumaya H."/>
            <person name="Kato K."/>
            <person name="Abe T."/>
            <person name="Yamamoto H."/>
            <person name="Nakanishi N."/>
            <person name="Okuyama R."/>
            <person name="Umemura M."/>
            <person name="Kaise T."/>
            <person name="Watanabe R."/>
            <person name="Okawa Y."/>
            <person name="Takahashi S."/>
            <person name="Takahashi Y."/>
        </authorList>
    </citation>
    <scope>FUNCTION</scope>
</reference>
<reference key="14">
    <citation type="journal article" date="2011" name="J. Biol. Chem.">
        <title>BCL-2 is a downstream target of ATF5 that mediates the prosurvival function of ATF5 in a cell type-dependent manner.</title>
        <authorList>
            <person name="Dluzen D."/>
            <person name="Li G."/>
            <person name="Tacelosky D."/>
            <person name="Moreau M."/>
            <person name="Liu D.X."/>
        </authorList>
    </citation>
    <scope>FUNCTION</scope>
    <scope>INDUCTION BY PRO-APOPTOTIC STIMULI</scope>
</reference>
<reference key="15">
    <citation type="journal article" date="2011" name="Mol. Cell. Biol.">
        <title>p300-Dependent ATF5 acetylation is essential for Egr-1 gene activation and cell proliferation and survival.</title>
        <authorList>
            <person name="Liu D.X."/>
            <person name="Qian D."/>
            <person name="Wang B."/>
            <person name="Yang J.M."/>
            <person name="Lu Z."/>
        </authorList>
    </citation>
    <scope>FUNCTION</scope>
</reference>
<reference key="16">
    <citation type="journal article" date="2012" name="J. Biol. Chem.">
        <title>Nucleophosmin (NPM1/B23) interacts with activating transcription factor 5 (ATF5) protein and promotes proteasome- and caspase-dependent ATF5 degradation in hepatocellular carcinoma cells.</title>
        <authorList>
            <person name="Liu X."/>
            <person name="Liu D."/>
            <person name="Qian D."/>
            <person name="Dai J."/>
            <person name="An Y."/>
            <person name="Jiang S."/>
            <person name="Stanley B."/>
            <person name="Yang J."/>
            <person name="Wang B."/>
            <person name="Liu X."/>
            <person name="Liu D.X."/>
        </authorList>
    </citation>
    <scope>FUNCTION</scope>
    <scope>INTERACTION WITH HSPA1A; HSPA1B AND NPM1</scope>
    <scope>SUBCELLULAR LOCATION</scope>
    <scope>POLYUBIQUITINATION</scope>
    <scope>MUTAGENESIS OF ASP-157</scope>
</reference>
<reference key="17">
    <citation type="journal article" date="2012" name="J. Cell. Biochem.">
        <title>ATF5, a possible regulator of osteogenic differentiation in human adipose-derived stem cells.</title>
        <authorList>
            <person name="Leong D.T."/>
            <person name="Abraham M.C."/>
            <person name="Gupta A."/>
            <person name="Lim T.C."/>
            <person name="Chew F.T."/>
            <person name="Hutmacher D.W."/>
        </authorList>
    </citation>
    <scope>FUNCTION</scope>
</reference>
<reference key="18">
    <citation type="journal article" date="2013" name="J. Proteome Res.">
        <title>Toward a comprehensive characterization of a human cancer cell phosphoproteome.</title>
        <authorList>
            <person name="Zhou H."/>
            <person name="Di Palma S."/>
            <person name="Preisinger C."/>
            <person name="Peng M."/>
            <person name="Polat A.N."/>
            <person name="Heck A.J."/>
            <person name="Mohammed S."/>
        </authorList>
    </citation>
    <scope>PHOSPHORYLATION [LARGE SCALE ANALYSIS] AT SER-256</scope>
    <scope>IDENTIFICATION BY MASS SPECTROMETRY [LARGE SCALE ANALYSIS]</scope>
    <source>
        <tissue>Erythroleukemia</tissue>
    </source>
</reference>
<reference key="19">
    <citation type="journal article" date="2014" name="J. Biol. Chem.">
        <title>N-terminal hydrophobic amino acids of activating transcription factor 5 (ATF5) protein confer interleukin 1beta (IL-1beta)-induced stabilization.</title>
        <authorList>
            <person name="Abe T."/>
            <person name="Kojima M."/>
            <person name="Akanuma S."/>
            <person name="Iwashita H."/>
            <person name="Yamazaki T."/>
            <person name="Okuyama R."/>
            <person name="Ichikawa K."/>
            <person name="Umemura M."/>
            <person name="Nakano H."/>
            <person name="Takahashi S."/>
            <person name="Takahashi Y."/>
        </authorList>
    </citation>
    <scope>FUNCTION</scope>
    <scope>INDUCTION BY IL1B</scope>
    <scope>INTERACTION WITH HSPA1A; HSPA1B AND NPM1</scope>
    <scope>MUTAGENESIS OF 3-LEU--VAL-25; 3-LEU-LEU-4; LEU-7; 9-LEU--LEU-11; 15-LEU-LEU-16 AND 21-LEU--VAL-25</scope>
</reference>
<reference key="20">
    <citation type="journal article" date="2014" name="Mol. Cell. Biol.">
        <title>p300-dependent acetylation of activating transcription factor 5 enhances C/EBPbeta transactivation of C/EBPalpha during 3T3-L1 differentiation.</title>
        <authorList>
            <person name="Zhao Y."/>
            <person name="Zhang Y.D."/>
            <person name="Zhang Y.Y."/>
            <person name="Qian S.W."/>
            <person name="Zhang Z.C."/>
            <person name="Li S.F."/>
            <person name="Guo L."/>
            <person name="Liu Y."/>
            <person name="Wen B."/>
            <person name="Lei Q.Y."/>
            <person name="Tang Q.Q."/>
            <person name="Li X."/>
        </authorList>
    </citation>
    <scope>FUNCTION</scope>
</reference>
<reference key="21">
    <citation type="journal article" date="2015" name="Cell">
        <title>ATF5 Connects the Pericentriolar Materials to the Proximal End of the Mother Centriole.</title>
        <authorList>
            <person name="Madarampalli B."/>
            <person name="Yuan Y."/>
            <person name="Liu D."/>
            <person name="Lengel K."/>
            <person name="Xu Y."/>
            <person name="Li G."/>
            <person name="Yang J."/>
            <person name="Liu X."/>
            <person name="Lu Z."/>
            <person name="Liu D.X."/>
        </authorList>
    </citation>
    <scope>FUNCTION</scope>
    <scope>INTERACTION WITH ALPHA-TUBULIN; GAMMA-TUBULIN; PCNT; TUBGCP2 AND TUBGCP4</scope>
    <scope>SUBCELLULAR LOCATION</scope>
</reference>
<reference key="22">
    <citation type="journal article" date="2015" name="Mol. Cell. Biol.">
        <title>Stabilization of ATF5 by TAK1-Nemo-like kinase critically regulates the interleukin-1beta-stimulated C/EBP signaling pathway.</title>
        <authorList>
            <person name="Zhang Z.Y."/>
            <person name="Li S.Z."/>
            <person name="Zhang H.H."/>
            <person name="Wu Q.R."/>
            <person name="Gong J."/>
            <person name="Liang T."/>
            <person name="Gao L."/>
            <person name="Xing N.N."/>
            <person name="Liu W.B."/>
            <person name="Du R.L."/>
            <person name="Zhang X.D."/>
        </authorList>
    </citation>
    <scope>FUNCTION</scope>
    <scope>INTERACTION WITH NLK</scope>
    <scope>PHOSPHORYLATION</scope>
    <scope>UBIQUITINATION</scope>
    <scope>MUTAGENESIS OF 92-SER--THR-94; SER-126 AND SER-190</scope>
</reference>
<evidence type="ECO:0000250" key="1">
    <source>
        <dbReference type="UniProtKB" id="O70191"/>
    </source>
</evidence>
<evidence type="ECO:0000250" key="2">
    <source>
        <dbReference type="UniProtKB" id="Q6P788"/>
    </source>
</evidence>
<evidence type="ECO:0000255" key="3">
    <source>
        <dbReference type="PROSITE-ProRule" id="PRU00978"/>
    </source>
</evidence>
<evidence type="ECO:0000256" key="4">
    <source>
        <dbReference type="SAM" id="MobiDB-lite"/>
    </source>
</evidence>
<evidence type="ECO:0000269" key="5">
    <source>
    </source>
</evidence>
<evidence type="ECO:0000269" key="6">
    <source>
    </source>
</evidence>
<evidence type="ECO:0000269" key="7">
    <source>
    </source>
</evidence>
<evidence type="ECO:0000269" key="8">
    <source>
    </source>
</evidence>
<evidence type="ECO:0000269" key="9">
    <source>
    </source>
</evidence>
<evidence type="ECO:0000269" key="10">
    <source>
    </source>
</evidence>
<evidence type="ECO:0000269" key="11">
    <source>
    </source>
</evidence>
<evidence type="ECO:0000269" key="12">
    <source>
    </source>
</evidence>
<evidence type="ECO:0000269" key="13">
    <source>
    </source>
</evidence>
<evidence type="ECO:0000269" key="14">
    <source>
    </source>
</evidence>
<evidence type="ECO:0000269" key="15">
    <source>
    </source>
</evidence>
<evidence type="ECO:0000269" key="16">
    <source>
    </source>
</evidence>
<evidence type="ECO:0000269" key="17">
    <source>
    </source>
</evidence>
<evidence type="ECO:0000269" key="18">
    <source>
    </source>
</evidence>
<evidence type="ECO:0000269" key="19">
    <source>
    </source>
</evidence>
<evidence type="ECO:0000269" key="20">
    <source>
    </source>
</evidence>
<evidence type="ECO:0000305" key="21"/>
<evidence type="ECO:0007744" key="22">
    <source>
    </source>
</evidence>
<dbReference type="EMBL" id="AF305687">
    <property type="protein sequence ID" value="AAG22558.1"/>
    <property type="molecule type" value="mRNA"/>
</dbReference>
<dbReference type="EMBL" id="AB073613">
    <property type="protein sequence ID" value="BAD38650.1"/>
    <property type="molecule type" value="mRNA"/>
</dbReference>
<dbReference type="EMBL" id="AB021663">
    <property type="protein sequence ID" value="BAA78477.2"/>
    <property type="molecule type" value="mRNA"/>
</dbReference>
<dbReference type="EMBL" id="AK024402">
    <property type="protein sequence ID" value="BAG51295.1"/>
    <property type="molecule type" value="mRNA"/>
</dbReference>
<dbReference type="EMBL" id="AC011452">
    <property type="status" value="NOT_ANNOTATED_CDS"/>
    <property type="molecule type" value="Genomic_DNA"/>
</dbReference>
<dbReference type="EMBL" id="CH471177">
    <property type="protein sequence ID" value="EAW52581.1"/>
    <property type="molecule type" value="Genomic_DNA"/>
</dbReference>
<dbReference type="EMBL" id="BC005174">
    <property type="protein sequence ID" value="AAH05174.1"/>
    <property type="molecule type" value="mRNA"/>
</dbReference>
<dbReference type="EMBL" id="AF101388">
    <property type="protein sequence ID" value="AAD28370.1"/>
    <property type="molecule type" value="mRNA"/>
</dbReference>
<dbReference type="CCDS" id="CCDS12789.1"/>
<dbReference type="RefSeq" id="NP_001180575.1">
    <property type="nucleotide sequence ID" value="NM_001193646.2"/>
</dbReference>
<dbReference type="RefSeq" id="NP_001277675.1">
    <property type="nucleotide sequence ID" value="NM_001290746.2"/>
</dbReference>
<dbReference type="RefSeq" id="NP_036200.2">
    <property type="nucleotide sequence ID" value="NM_012068.5"/>
</dbReference>
<dbReference type="RefSeq" id="XP_011524931.1">
    <property type="nucleotide sequence ID" value="XM_011526629.4"/>
</dbReference>
<dbReference type="SMR" id="Q9Y2D1"/>
<dbReference type="BioGRID" id="116487">
    <property type="interactions" value="21"/>
</dbReference>
<dbReference type="ComplexPortal" id="CPX-6585">
    <property type="entry name" value="bZIP transcription factor complex, ATF5-BATF"/>
</dbReference>
<dbReference type="ComplexPortal" id="CPX-6586">
    <property type="entry name" value="bZIP transcription factor complex, ATF5-CEBPA"/>
</dbReference>
<dbReference type="ComplexPortal" id="CPX-6588">
    <property type="entry name" value="bZIP transcription factor complex, ATF5-CEBPG"/>
</dbReference>
<dbReference type="ComplexPortal" id="CPX-6589">
    <property type="entry name" value="bZIP transcription factor complex, ATF5-CEBPE"/>
</dbReference>
<dbReference type="FunCoup" id="Q9Y2D1">
    <property type="interactions" value="848"/>
</dbReference>
<dbReference type="IntAct" id="Q9Y2D1">
    <property type="interactions" value="18"/>
</dbReference>
<dbReference type="STRING" id="9606.ENSP00000396954"/>
<dbReference type="DrugBank" id="DB00852">
    <property type="generic name" value="Pseudoephedrine"/>
</dbReference>
<dbReference type="MoonProt" id="Q9Y2D1"/>
<dbReference type="GlyGen" id="Q9Y2D1">
    <property type="glycosylation" value="2 sites, 1 O-linked glycan (1 site)"/>
</dbReference>
<dbReference type="iPTMnet" id="Q9Y2D1"/>
<dbReference type="PhosphoSitePlus" id="Q9Y2D1"/>
<dbReference type="BioMuta" id="ATF5"/>
<dbReference type="DMDM" id="308153647"/>
<dbReference type="jPOST" id="Q9Y2D1"/>
<dbReference type="MassIVE" id="Q9Y2D1"/>
<dbReference type="PaxDb" id="9606-ENSP00000396954"/>
<dbReference type="PeptideAtlas" id="Q9Y2D1"/>
<dbReference type="ProteomicsDB" id="85733"/>
<dbReference type="TopDownProteomics" id="Q9Y2D1"/>
<dbReference type="Antibodypedia" id="18799">
    <property type="antibodies" value="299 antibodies from 32 providers"/>
</dbReference>
<dbReference type="DNASU" id="22809"/>
<dbReference type="Ensembl" id="ENST00000423777.7">
    <property type="protein sequence ID" value="ENSP00000396954.1"/>
    <property type="gene ID" value="ENSG00000169136.13"/>
</dbReference>
<dbReference type="Ensembl" id="ENST00000595125.5">
    <property type="protein sequence ID" value="ENSP00000470633.1"/>
    <property type="gene ID" value="ENSG00000169136.13"/>
</dbReference>
<dbReference type="GeneID" id="22809"/>
<dbReference type="KEGG" id="hsa:22809"/>
<dbReference type="MANE-Select" id="ENST00000423777.7">
    <property type="protein sequence ID" value="ENSP00000396954.1"/>
    <property type="RefSeq nucleotide sequence ID" value="NM_001193646.2"/>
    <property type="RefSeq protein sequence ID" value="NP_001180575.1"/>
</dbReference>
<dbReference type="UCSC" id="uc002prd.4">
    <property type="organism name" value="human"/>
</dbReference>
<dbReference type="AGR" id="HGNC:790"/>
<dbReference type="CTD" id="22809"/>
<dbReference type="DisGeNET" id="22809"/>
<dbReference type="GeneCards" id="ATF5"/>
<dbReference type="HGNC" id="HGNC:790">
    <property type="gene designation" value="ATF5"/>
</dbReference>
<dbReference type="HPA" id="ENSG00000169136">
    <property type="expression patterns" value="Tissue enriched (liver)"/>
</dbReference>
<dbReference type="MIM" id="606398">
    <property type="type" value="gene"/>
</dbReference>
<dbReference type="neXtProt" id="NX_Q9Y2D1"/>
<dbReference type="OpenTargets" id="ENSG00000169136"/>
<dbReference type="PharmGKB" id="PA25090"/>
<dbReference type="VEuPathDB" id="HostDB:ENSG00000169136"/>
<dbReference type="eggNOG" id="KOG4571">
    <property type="taxonomic scope" value="Eukaryota"/>
</dbReference>
<dbReference type="GeneTree" id="ENSGT00530000063801"/>
<dbReference type="HOGENOM" id="CLU_083640_0_0_1"/>
<dbReference type="InParanoid" id="Q9Y2D1"/>
<dbReference type="OMA" id="QGNEICA"/>
<dbReference type="OrthoDB" id="5847285at2759"/>
<dbReference type="PAN-GO" id="Q9Y2D1">
    <property type="GO annotations" value="4 GO annotations based on evolutionary models"/>
</dbReference>
<dbReference type="PhylomeDB" id="Q9Y2D1"/>
<dbReference type="TreeFam" id="TF316136"/>
<dbReference type="PathwayCommons" id="Q9Y2D1"/>
<dbReference type="Reactome" id="R-HSA-9648895">
    <property type="pathway name" value="Response of EIF2AK1 (HRI) to heme deficiency"/>
</dbReference>
<dbReference type="Reactome" id="R-HSA-9841251">
    <property type="pathway name" value="Mitochondrial unfolded protein response (UPRmt)"/>
</dbReference>
<dbReference type="SignaLink" id="Q9Y2D1"/>
<dbReference type="SIGNOR" id="Q9Y2D1"/>
<dbReference type="BioGRID-ORCS" id="22809">
    <property type="hits" value="21 hits in 1184 CRISPR screens"/>
</dbReference>
<dbReference type="ChiTaRS" id="ATF5">
    <property type="organism name" value="human"/>
</dbReference>
<dbReference type="GeneWiki" id="ATF5"/>
<dbReference type="GenomeRNAi" id="22809"/>
<dbReference type="Pharos" id="Q9Y2D1">
    <property type="development level" value="Tbio"/>
</dbReference>
<dbReference type="PRO" id="PR:Q9Y2D1"/>
<dbReference type="Proteomes" id="UP000005640">
    <property type="component" value="Chromosome 19"/>
</dbReference>
<dbReference type="RNAct" id="Q9Y2D1">
    <property type="molecule type" value="protein"/>
</dbReference>
<dbReference type="Bgee" id="ENSG00000169136">
    <property type="expression patterns" value="Expressed in right lobe of liver and 117 other cell types or tissues"/>
</dbReference>
<dbReference type="ExpressionAtlas" id="Q9Y2D1">
    <property type="expression patterns" value="baseline and differential"/>
</dbReference>
<dbReference type="GO" id="GO:0005813">
    <property type="term" value="C:centrosome"/>
    <property type="evidence" value="ECO:0000314"/>
    <property type="project" value="UniProtKB"/>
</dbReference>
<dbReference type="GO" id="GO:0000785">
    <property type="term" value="C:chromatin"/>
    <property type="evidence" value="ECO:0000247"/>
    <property type="project" value="NTNU_SB"/>
</dbReference>
<dbReference type="GO" id="GO:0005829">
    <property type="term" value="C:cytosol"/>
    <property type="evidence" value="ECO:0000314"/>
    <property type="project" value="HPA"/>
</dbReference>
<dbReference type="GO" id="GO:0005654">
    <property type="term" value="C:nucleoplasm"/>
    <property type="evidence" value="ECO:0000314"/>
    <property type="project" value="HPA"/>
</dbReference>
<dbReference type="GO" id="GO:0005634">
    <property type="term" value="C:nucleus"/>
    <property type="evidence" value="ECO:0000314"/>
    <property type="project" value="UniProtKB"/>
</dbReference>
<dbReference type="GO" id="GO:0090575">
    <property type="term" value="C:RNA polymerase II transcription regulator complex"/>
    <property type="evidence" value="ECO:0000353"/>
    <property type="project" value="ComplexPortal"/>
</dbReference>
<dbReference type="GO" id="GO:0003682">
    <property type="term" value="F:chromatin binding"/>
    <property type="evidence" value="ECO:0000314"/>
    <property type="project" value="UniProtKB"/>
</dbReference>
<dbReference type="GO" id="GO:0001228">
    <property type="term" value="F:DNA-binding transcription activator activity, RNA polymerase II-specific"/>
    <property type="evidence" value="ECO:0000314"/>
    <property type="project" value="NTNU_SB"/>
</dbReference>
<dbReference type="GO" id="GO:0003700">
    <property type="term" value="F:DNA-binding transcription factor activity"/>
    <property type="evidence" value="ECO:0000314"/>
    <property type="project" value="UniProtKB"/>
</dbReference>
<dbReference type="GO" id="GO:0000981">
    <property type="term" value="F:DNA-binding transcription factor activity, RNA polymerase II-specific"/>
    <property type="evidence" value="ECO:0000247"/>
    <property type="project" value="NTNU_SB"/>
</dbReference>
<dbReference type="GO" id="GO:0019900">
    <property type="term" value="F:kinase binding"/>
    <property type="evidence" value="ECO:0000353"/>
    <property type="project" value="UniProtKB"/>
</dbReference>
<dbReference type="GO" id="GO:0000977">
    <property type="term" value="F:RNA polymerase II transcription regulatory region sequence-specific DNA binding"/>
    <property type="evidence" value="ECO:0000315"/>
    <property type="project" value="NTNU_SB"/>
</dbReference>
<dbReference type="GO" id="GO:0043565">
    <property type="term" value="F:sequence-specific DNA binding"/>
    <property type="evidence" value="ECO:0000250"/>
    <property type="project" value="UniProtKB"/>
</dbReference>
<dbReference type="GO" id="GO:0000976">
    <property type="term" value="F:transcription cis-regulatory region binding"/>
    <property type="evidence" value="ECO:0000250"/>
    <property type="project" value="UniProtKB"/>
</dbReference>
<dbReference type="GO" id="GO:0015631">
    <property type="term" value="F:tubulin binding"/>
    <property type="evidence" value="ECO:0000314"/>
    <property type="project" value="UniProtKB"/>
</dbReference>
<dbReference type="GO" id="GO:0021930">
    <property type="term" value="P:cerebellar granule cell precursor proliferation"/>
    <property type="evidence" value="ECO:0000250"/>
    <property type="project" value="UniProtKB"/>
</dbReference>
<dbReference type="GO" id="GO:0007623">
    <property type="term" value="P:circadian rhythm"/>
    <property type="evidence" value="ECO:0007669"/>
    <property type="project" value="Ensembl"/>
</dbReference>
<dbReference type="GO" id="GO:0045444">
    <property type="term" value="P:fat cell differentiation"/>
    <property type="evidence" value="ECO:0000315"/>
    <property type="project" value="UniProtKB"/>
</dbReference>
<dbReference type="GO" id="GO:0035264">
    <property type="term" value="P:multicellular organism growth"/>
    <property type="evidence" value="ECO:0007669"/>
    <property type="project" value="Ensembl"/>
</dbReference>
<dbReference type="GO" id="GO:0043066">
    <property type="term" value="P:negative regulation of apoptotic process"/>
    <property type="evidence" value="ECO:0000315"/>
    <property type="project" value="UniProtKB"/>
</dbReference>
<dbReference type="GO" id="GO:1902750">
    <property type="term" value="P:negative regulation of cell cycle G2/M phase transition"/>
    <property type="evidence" value="ECO:0000314"/>
    <property type="project" value="UniProtKB"/>
</dbReference>
<dbReference type="GO" id="GO:0008285">
    <property type="term" value="P:negative regulation of cell population proliferation"/>
    <property type="evidence" value="ECO:0000314"/>
    <property type="project" value="UniProtKB"/>
</dbReference>
<dbReference type="GO" id="GO:0045892">
    <property type="term" value="P:negative regulation of DNA-templated transcription"/>
    <property type="evidence" value="ECO:0000314"/>
    <property type="project" value="UniProtKB"/>
</dbReference>
<dbReference type="GO" id="GO:0021891">
    <property type="term" value="P:olfactory bulb interneuron development"/>
    <property type="evidence" value="ECO:0007669"/>
    <property type="project" value="Ensembl"/>
</dbReference>
<dbReference type="GO" id="GO:0045893">
    <property type="term" value="P:positive regulation of DNA-templated transcription"/>
    <property type="evidence" value="ECO:0000314"/>
    <property type="project" value="UniProtKB"/>
</dbReference>
<dbReference type="GO" id="GO:0045944">
    <property type="term" value="P:positive regulation of transcription by RNA polymerase II"/>
    <property type="evidence" value="ECO:0000314"/>
    <property type="project" value="NTNU_SB"/>
</dbReference>
<dbReference type="GO" id="GO:0009791">
    <property type="term" value="P:post-embryonic development"/>
    <property type="evidence" value="ECO:0007669"/>
    <property type="project" value="Ensembl"/>
</dbReference>
<dbReference type="GO" id="GO:0046605">
    <property type="term" value="P:regulation of centrosome cycle"/>
    <property type="evidence" value="ECO:0000314"/>
    <property type="project" value="UniProtKB"/>
</dbReference>
<dbReference type="GO" id="GO:0006355">
    <property type="term" value="P:regulation of DNA-templated transcription"/>
    <property type="evidence" value="ECO:0000314"/>
    <property type="project" value="UniProtKB"/>
</dbReference>
<dbReference type="GO" id="GO:0006357">
    <property type="term" value="P:regulation of transcription by RNA polymerase II"/>
    <property type="evidence" value="ECO:0000318"/>
    <property type="project" value="GO_Central"/>
</dbReference>
<dbReference type="CDD" id="cd14692">
    <property type="entry name" value="bZIP_ATF4"/>
    <property type="match status" value="1"/>
</dbReference>
<dbReference type="FunFam" id="1.20.5.170:FF:000021">
    <property type="entry name" value="Cyclic AMP-dependent transcription factor ATF-4"/>
    <property type="match status" value="1"/>
</dbReference>
<dbReference type="Gene3D" id="1.20.5.170">
    <property type="match status" value="1"/>
</dbReference>
<dbReference type="InterPro" id="IPR004827">
    <property type="entry name" value="bZIP"/>
</dbReference>
<dbReference type="InterPro" id="IPR046347">
    <property type="entry name" value="bZIP_sf"/>
</dbReference>
<dbReference type="PANTHER" id="PTHR13044">
    <property type="entry name" value="ACTIVATING TRANSCRIPTION FACTOR ATF 4/5"/>
    <property type="match status" value="1"/>
</dbReference>
<dbReference type="PANTHER" id="PTHR13044:SF3">
    <property type="entry name" value="CYCLIC AMP-DEPENDENT TRANSCRIPTION FACTOR ATF-5"/>
    <property type="match status" value="1"/>
</dbReference>
<dbReference type="Pfam" id="PF00170">
    <property type="entry name" value="bZIP_1"/>
    <property type="match status" value="1"/>
</dbReference>
<dbReference type="SMART" id="SM00338">
    <property type="entry name" value="BRLZ"/>
    <property type="match status" value="1"/>
</dbReference>
<dbReference type="SUPFAM" id="SSF57959">
    <property type="entry name" value="Leucine zipper domain"/>
    <property type="match status" value="1"/>
</dbReference>
<dbReference type="PROSITE" id="PS50217">
    <property type="entry name" value="BZIP"/>
    <property type="match status" value="1"/>
</dbReference>
<organism>
    <name type="scientific">Homo sapiens</name>
    <name type="common">Human</name>
    <dbReference type="NCBI Taxonomy" id="9606"/>
    <lineage>
        <taxon>Eukaryota</taxon>
        <taxon>Metazoa</taxon>
        <taxon>Chordata</taxon>
        <taxon>Craniata</taxon>
        <taxon>Vertebrata</taxon>
        <taxon>Euteleostomi</taxon>
        <taxon>Mammalia</taxon>
        <taxon>Eutheria</taxon>
        <taxon>Euarchontoglires</taxon>
        <taxon>Primates</taxon>
        <taxon>Haplorrhini</taxon>
        <taxon>Catarrhini</taxon>
        <taxon>Hominidae</taxon>
        <taxon>Homo</taxon>
    </lineage>
</organism>
<keyword id="KW-0007">Acetylation</keyword>
<keyword id="KW-0010">Activator</keyword>
<keyword id="KW-0963">Cytoplasm</keyword>
<keyword id="KW-0206">Cytoskeleton</keyword>
<keyword id="KW-0238">DNA-binding</keyword>
<keyword id="KW-0539">Nucleus</keyword>
<keyword id="KW-0597">Phosphoprotein</keyword>
<keyword id="KW-1267">Proteomics identification</keyword>
<keyword id="KW-1185">Reference proteome</keyword>
<keyword id="KW-0804">Transcription</keyword>
<keyword id="KW-0805">Transcription regulation</keyword>
<keyword id="KW-0832">Ubl conjugation</keyword>
<sequence length="282" mass="30674">MSLLATLGLELDRALLPASGLGWLVDYGKLPPAPAPLAPYEVLGGALEGGLPVGGEPLAGDGFSDWMTERVDFTALLPLEPPLPPGTLPQPSPTPPDLEAMASLLKKELEQMEDFFLDAPPLPPPSPPPLPPPPLPPAPSLPLSLPSFDLPQPPVLDTLDLLAIYCRNEAGQEEVGMPPLPPPQQPPPPSPPQPSRLAPYPHPATTRGDRKQKKRDQNKSAALRYRQRKRAEGEALEGECQGLEARNRELKERAESVEREIQYVKDLLIEVYKARSQRTRSC</sequence>
<feature type="chain" id="PRO_0000076586" description="Cyclic AMP-dependent transcription factor ATF-5">
    <location>
        <begin position="1"/>
        <end position="282"/>
    </location>
</feature>
<feature type="domain" description="bZIP" evidence="3">
    <location>
        <begin position="208"/>
        <end position="271"/>
    </location>
</feature>
<feature type="region of interest" description="Required for protein stabilization induced by IL1B" evidence="18">
    <location>
        <begin position="1"/>
        <end position="21"/>
    </location>
</feature>
<feature type="region of interest" description="Disordered" evidence="4">
    <location>
        <begin position="116"/>
        <end position="152"/>
    </location>
</feature>
<feature type="region of interest" description="Interaction with PTP4A1">
    <location>
        <begin position="119"/>
        <end position="217"/>
    </location>
</feature>
<feature type="region of interest" description="Disordered" evidence="4">
    <location>
        <begin position="173"/>
        <end position="238"/>
    </location>
</feature>
<feature type="region of interest" description="Basic motif" evidence="3">
    <location>
        <begin position="210"/>
        <end position="230"/>
    </location>
</feature>
<feature type="region of interest" description="Leucine-zipper" evidence="3">
    <location>
        <begin position="236"/>
        <end position="250"/>
    </location>
</feature>
<feature type="compositionally biased region" description="Pro residues" evidence="4">
    <location>
        <begin position="120"/>
        <end position="140"/>
    </location>
</feature>
<feature type="compositionally biased region" description="Low complexity" evidence="4">
    <location>
        <begin position="141"/>
        <end position="150"/>
    </location>
</feature>
<feature type="compositionally biased region" description="Pro residues" evidence="4">
    <location>
        <begin position="178"/>
        <end position="194"/>
    </location>
</feature>
<feature type="modified residue" description="N6-acetyllysine; by EP300" evidence="1">
    <location>
        <position position="29"/>
    </location>
</feature>
<feature type="modified residue" description="Phosphoserine" evidence="22">
    <location>
        <position position="256"/>
    </location>
</feature>
<feature type="sequence variant" id="VAR_022786" description="In dbSNP:rs283526." evidence="6 8">
    <original>P</original>
    <variation>L</variation>
    <location>
        <position position="121"/>
    </location>
</feature>
<feature type="mutagenesis site" description="Highly increases protein levels. No effect on protein stability enhanced by IL1B." evidence="18">
    <original>LLATLGLELDRALLPASGLGWLV</original>
    <variation>AAATAGAEADRAAAPASGAGWAA</variation>
    <location>
        <begin position="3"/>
        <end position="25"/>
    </location>
</feature>
<feature type="mutagenesis site" description="Increases protein levels. No effect on protein stability enhanced by IL1B." evidence="18">
    <original>LL</original>
    <variation>AA</variation>
    <location>
        <begin position="3"/>
        <end position="4"/>
    </location>
</feature>
<feature type="mutagenesis site" description="Decreases protein levels." evidence="18">
    <original>LL</original>
    <variation>II</variation>
    <location>
        <begin position="3"/>
        <end position="4"/>
    </location>
</feature>
<feature type="mutagenesis site" description="No effect on protein levels. No effect on protein stability enhanced by IL1B." evidence="18">
    <original>LL</original>
    <variation>VV</variation>
    <location>
        <begin position="3"/>
        <end position="4"/>
    </location>
</feature>
<feature type="mutagenesis site" description="Increases protein levels." evidence="18">
    <original>L</original>
    <variation>A</variation>
    <location>
        <position position="7"/>
    </location>
</feature>
<feature type="mutagenesis site" description="Increases protein levels." evidence="18">
    <original>LEL</original>
    <variation>AEA</variation>
    <location>
        <begin position="9"/>
        <end position="11"/>
    </location>
</feature>
<feature type="mutagenesis site" description="Increases protein levels." evidence="18">
    <original>LL</original>
    <variation>AA</variation>
    <location>
        <begin position="15"/>
        <end position="16"/>
    </location>
</feature>
<feature type="mutagenesis site" description="Increases protein levels." evidence="18">
    <original>LGWLV</original>
    <variation>AGWAA</variation>
    <location>
        <begin position="21"/>
        <end position="25"/>
    </location>
</feature>
<feature type="mutagenesis site" description="Not phosphorylated; when associated with A-126 and A-190.">
    <original>SPT</original>
    <variation>APA</variation>
    <location>
        <begin position="92"/>
        <end position="94"/>
    </location>
</feature>
<feature type="mutagenesis site" description="Not phosphorylated; when associated with 92-A--A-94 and A-190.">
    <original>S</original>
    <variation>A</variation>
    <location>
        <position position="126"/>
    </location>
</feature>
<feature type="mutagenesis site" description="Resistant to cleavage by CASP3." evidence="16">
    <original>D</original>
    <variation>A</variation>
    <location>
        <position position="157"/>
    </location>
</feature>
<feature type="mutagenesis site" description="Not phosphorylated; when associated with 92-A--A-94 and A-126.">
    <original>S</original>
    <variation>A</variation>
    <location>
        <position position="190"/>
    </location>
</feature>
<feature type="sequence conflict" description="In Ref. 8; AAD28370." evidence="21" ref="8">
    <original>LLA</original>
    <variation>RHE</variation>
    <location>
        <begin position="161"/>
        <end position="163"/>
    </location>
</feature>
<comment type="function">
    <text evidence="1 2 5 7 9 11 12 13 14 15 16 17 18 19 20">Transcription factor that either stimulates or represses gene transcription through binding of different DNA regulatory elements such as cAMP response element (CRE) (consensus: 5'-GTGACGT[AC][AG]-3'), ATF5-specific response element (ARE) (consensus: 5'-C[CT]TCT[CT]CCTT[AT]-3') but also the amino acid response element (AARE), present in many viral and cellular promoters. Critically involved, often in a cell type-dependent manner, in cell survival, proliferation, and differentiation (PubMed:10373550, PubMed:15358120, PubMed:20654631, PubMed:21212266). Its transcriptional activity is enhanced by CCND3 and slightly inhibited by CDK4 (PubMed:15358120). Important regulator of the cerebral cortex formation, functions in cerebral cortical neuroprogenitor cells to maintain proliferation and to block differentiation into neurons. Must be down-regulated in order for such cells to exit the cycle and differentiate (By similarity). Participates in the pathways by which SHH promotes cerebellar granule neuron progenitor cells proliferation (By similarity). Critical for survival of mature olfactory sensory neurons (OSN), directs expression of OSN-specific genes (By similarity). May be involved in osteogenic differentiation (PubMed:22442021). Promotes cell proliferation and survival by inducing the expression of EGR1 sinergistically with ELK1. Once acetylated by EP300, binds to ARE sequences on target genes promoters, such as BCL2 and EGR1 (PubMed:21791614). Plays an anti-apoptotic role through the transcriptional regulation of BCL2, this function seems to be cell type-dependent (By similarity). Cooperates with NR1I3/CAR in the transcriptional activation of CYP2B6 in liver (PubMed:18332083). In hepatic cells, represses CRE-dependent transcription and inhibits proliferation by blocking at G2/M phase (PubMed:18701499, PubMed:22528486). May act as a negative regulator of IL1B transduction pathway in liver (PubMed:24379400). Upon IL1B stimulus, cooperates with NLK to activate the transactivation activity of C/EBP subfamily members (PubMed:25512613). Besides its function of transcription factor, acts as a cofactor of CEBPB to activate CEBPA and promote adipocyte differentiation (PubMed:24216764). Regulates centrosome dynamics in a cell-cycle- and centriole-age-dependent manner. Forms 9-foci symmetrical ring scaffold around the mother centriole to control centrosome function and the interaction between centrioles and pericentriolar material (PubMed:26213385).</text>
</comment>
<comment type="subunit">
    <text evidence="1 7 16 18 19 20">Binds DNA as a dimer. Interacts with PTP4A1/PRL-1 (By similarity). Interacts with CCND3, but not with CCND1 or CCND2 (PubMed:15358120). Interacts with HSPA1A or HSPA1B; the interaction protects ATF5 from degradation via proteasome-dependent and caspase-dependent processes. Interacts (via C-terminal region) with NPM1 (via C-terminal region); the interaction leads to loss of association between HSPA1A or HSPA1B and ATF5 and promotes ATF5 degradation via proteasome-dependent and caspase-dependent processes (PubMed:22528486, PubMed:24379400). Interacts with NLK; the interaction stabilizes ATF5 at the protein level in a kinase-independent manner (PubMed:25512613). Interacts with alpha-tubulin, gamma-tubulin members TUBGCP2 and TUBGCP4, PCNT; the ATF5:PCNT:polyglutamylated tubulin (PGT) tripartite unites the mother centriole and the pericentriolar material (PCM) in the centrosome (PubMed:26213385). Interacts with CEBPB and EP300; EP300 is required for ATF5 and CEBPB interaction and DNA binding (By similarity).</text>
</comment>
<comment type="interaction">
    <interactant intactId="EBI-492509">
        <id>Q9Y2D1</id>
    </interactant>
    <interactant intactId="EBI-1045350">
        <id>Q16204</id>
        <label>CCDC6</label>
    </interactant>
    <organismsDiffer>false</organismsDiffer>
    <experiments>3</experiments>
</comment>
<comment type="interaction">
    <interactant intactId="EBI-492509">
        <id>Q9Y2D1</id>
    </interactant>
    <interactant intactId="EBI-1172054">
        <id>P49715</id>
        <label>CEBPA</label>
    </interactant>
    <organismsDiffer>false</organismsDiffer>
    <experiments>2</experiments>
</comment>
<comment type="interaction">
    <interactant intactId="EBI-492509">
        <id>Q9Y2D1</id>
    </interactant>
    <interactant intactId="EBI-740209">
        <id>P53567</id>
        <label>CEBPG</label>
    </interactant>
    <organismsDiffer>false</organismsDiffer>
    <experiments>8</experiments>
</comment>
<comment type="interaction">
    <interactant intactId="EBI-492509">
        <id>Q9Y2D1</id>
    </interactant>
    <interactant intactId="EBI-529989">
        <id>Q9NRI5</id>
        <label>DISC1</label>
    </interactant>
    <organismsDiffer>false</organismsDiffer>
    <experiments>8</experiments>
</comment>
<comment type="interaction">
    <interactant intactId="EBI-492509">
        <id>Q9Y2D1</id>
    </interactant>
    <interactant intactId="EBI-491065">
        <id>Q14232</id>
        <label>EIF2B1</label>
    </interactant>
    <organismsDiffer>false</organismsDiffer>
    <experiments>5</experiments>
</comment>
<comment type="interaction">
    <interactant intactId="EBI-492509">
        <id>Q9Y2D1</id>
    </interactant>
    <interactant intactId="EBI-713355">
        <id>Q13227</id>
        <label>GPS2</label>
    </interactant>
    <organismsDiffer>false</organismsDiffer>
    <experiments>3</experiments>
</comment>
<comment type="interaction">
    <interactant intactId="EBI-492509">
        <id>Q9Y2D1</id>
    </interactant>
    <interactant intactId="EBI-711909">
        <id>P02766</id>
        <label>TTR</label>
    </interactant>
    <organismsDiffer>false</organismsDiffer>
    <experiments>3</experiments>
</comment>
<comment type="subcellular location">
    <subcellularLocation>
        <location evidence="7">Cytoplasm</location>
    </subcellularLocation>
    <subcellularLocation>
        <location evidence="3 7 16">Nucleus</location>
    </subcellularLocation>
    <subcellularLocation>
        <location evidence="20">Cytoplasm</location>
        <location evidence="20">Cytoskeleton</location>
        <location evidence="20">Microtubule organizing center</location>
        <location evidence="20">Centrosome</location>
    </subcellularLocation>
    <text evidence="20">Actively transported to the centrosome and accumulated in the pericentriolar material (PCM) during G1 to M phase via a microtubule-dependent mechanism. During late telophase and cytokinesis, translocates from the centrosome to the midbody.</text>
</comment>
<comment type="tissue specificity">
    <text evidence="9">Widely expressed with higher expression levels in liver.</text>
</comment>
<comment type="induction">
    <text evidence="10 13 18">Down-regulated by pro-apoptotic stimuli (PubMed:21212266). However, the pro-apoptotic cisplatin increases protein levels by inhibiting polyubiquitination (PubMed:18458088). IL1B increases protein levels through protein stabilization and increase of translation efficiency (PubMed:24379400).</text>
</comment>
<comment type="PTM">
    <text evidence="5 10 16 19">Ubiquitinated by CDC34 and UBE2B in order to be degraded by the proteasome. Cisplatin inhibits ubiquitination and proteasome-mediated degradation by inhibiting the interaction with CDC34 (PubMed:18458088). Ubiquitination and degradation by the proteasome are inhibited by NLK in a kinase-independent manner (PubMed:25512613).</text>
</comment>
<comment type="PTM">
    <text evidence="19">Phosphorylated by NLK, probably at Ser-92, Thr-94, Ser-126 and Ser-190.</text>
</comment>
<comment type="PTM">
    <text evidence="1 2">Acetylated at Lys-29 by EP300, the acetylation enhances the interaction with CEBPB, DNA-binding and transactivation activity.</text>
</comment>
<comment type="similarity">
    <text evidence="21">Belongs to the bZIP family.</text>
</comment>
<comment type="online information" name="Atlas of Genetics and Cytogenetics in Oncology and Haematology">
    <link uri="https://atlasgeneticsoncology.org/gene/50361/ATF5"/>
</comment>
<gene>
    <name type="primary">ATF5</name>
    <name type="synonym">ATFX</name>
</gene>
<accession>Q9Y2D1</accession>
<accession>B3KND3</accession>
<accession>Q9BSA1</accession>
<accession>Q9UNQ3</accession>
<protein>
    <recommendedName>
        <fullName>Cyclic AMP-dependent transcription factor ATF-5</fullName>
        <shortName>cAMP-dependent transcription factor ATF-5</shortName>
    </recommendedName>
    <alternativeName>
        <fullName>Activating transcription factor 5</fullName>
    </alternativeName>
    <alternativeName>
        <fullName>Transcription factor ATFx</fullName>
    </alternativeName>
</protein>